<keyword id="KW-0025">Alternative splicing</keyword>
<keyword id="KW-0966">Cell projection</keyword>
<keyword id="KW-0969">Cilium</keyword>
<keyword id="KW-0970">Cilium biogenesis/degradation</keyword>
<keyword id="KW-1185">Reference proteome</keyword>
<evidence type="ECO:0000250" key="1">
    <source>
        <dbReference type="UniProtKB" id="Q96BN6"/>
    </source>
</evidence>
<evidence type="ECO:0000256" key="2">
    <source>
        <dbReference type="SAM" id="MobiDB-lite"/>
    </source>
</evidence>
<evidence type="ECO:0000269" key="3">
    <source>
    </source>
</evidence>
<evidence type="ECO:0000303" key="4">
    <source>
    </source>
</evidence>
<evidence type="ECO:0000303" key="5">
    <source>
    </source>
</evidence>
<evidence type="ECO:0000303" key="6">
    <source>
    </source>
</evidence>
<evidence type="ECO:0000305" key="7"/>
<evidence type="ECO:0000312" key="8">
    <source>
        <dbReference type="MGI" id="MGI:2145567"/>
    </source>
</evidence>
<feature type="chain" id="PRO_0000319934" description="Primary cilium assembly protein FAM149B1">
    <location>
        <begin position="1"/>
        <end position="578"/>
    </location>
</feature>
<feature type="region of interest" description="Disordered" evidence="2">
    <location>
        <begin position="22"/>
        <end position="81"/>
    </location>
</feature>
<feature type="region of interest" description="Disordered" evidence="2">
    <location>
        <begin position="410"/>
        <end position="439"/>
    </location>
</feature>
<feature type="region of interest" description="Disordered" evidence="2">
    <location>
        <begin position="486"/>
        <end position="578"/>
    </location>
</feature>
<feature type="compositionally biased region" description="Basic and acidic residues" evidence="2">
    <location>
        <begin position="43"/>
        <end position="53"/>
    </location>
</feature>
<feature type="compositionally biased region" description="Polar residues" evidence="2">
    <location>
        <begin position="54"/>
        <end position="74"/>
    </location>
</feature>
<feature type="compositionally biased region" description="Polar residues" evidence="2">
    <location>
        <begin position="524"/>
        <end position="542"/>
    </location>
</feature>
<feature type="compositionally biased region" description="Polar residues" evidence="2">
    <location>
        <begin position="557"/>
        <end position="567"/>
    </location>
</feature>
<feature type="splice variant" id="VSP_031535" description="In isoform 2." evidence="5">
    <location>
        <begin position="145"/>
        <end position="237"/>
    </location>
</feature>
<feature type="splice variant" id="VSP_031536" description="In isoform 4 and isoform 6." evidence="4 6">
    <location>
        <begin position="183"/>
        <end position="236"/>
    </location>
</feature>
<feature type="splice variant" id="VSP_031537" description="In isoform 6." evidence="6">
    <original>DDESNVEITRLDSGSPYVLNEQHPLVLPRVPQSKVPSITSSPMSFCQASGHQPNVSGLLI</original>
    <variation>GKDPHDTSVKITIDDLQTPVSHLYVCAAAQTQHPVCTRQTLPPSYNTTPLLLFNFETRFL</variation>
    <location>
        <begin position="300"/>
        <end position="359"/>
    </location>
</feature>
<feature type="splice variant" id="VSP_031538" description="In isoform 5." evidence="7">
    <original>DDESNVEITRLDSGSPYVLNEQHPLVLPRVPQSKVPSIT</original>
    <variation>EKRPNENTASRWPSASQKEAIREPSPDGSLILDPRTVRK</variation>
    <location>
        <begin position="300"/>
        <end position="338"/>
    </location>
</feature>
<feature type="splice variant" id="VSP_031539" description="In isoform 5." evidence="7">
    <location>
        <begin position="339"/>
        <end position="578"/>
    </location>
</feature>
<feature type="splice variant" id="VSP_031540" description="In isoform 6." evidence="6">
    <location>
        <begin position="360"/>
        <end position="578"/>
    </location>
</feature>
<feature type="splice variant" id="VSP_031541" description="In isoform 4." evidence="4">
    <location>
        <begin position="377"/>
        <end position="451"/>
    </location>
</feature>
<feature type="splice variant" id="VSP_031542" description="In isoform 3." evidence="5">
    <original>PDTQYRSSCASEYPHQARPGRGSAGPQSHGSTKPQSRGGPISRTRQ</original>
    <variation>THSTEVHVHLSILIRPDLAGALQVLSHMGLQNLRAEVDPSLEPGNDHRASENLQGCSRLGSTWRLFMPQHSGTG</variation>
    <location>
        <begin position="533"/>
        <end position="578"/>
    </location>
</feature>
<name>F149B_MOUSE</name>
<proteinExistence type="evidence at transcript level"/>
<gene>
    <name evidence="8" type="primary">Fam149b1</name>
    <name type="synonym">Fam149b</name>
    <name type="synonym">Kiaa0974</name>
</gene>
<accession>Q6NSV7</accession>
<accession>A0JLS8</accession>
<accession>Q6PES0</accession>
<accession>Q6ZQ13</accession>
<accession>Q8CCW6</accession>
<accession>Q8R3J2</accession>
<sequence length="578" mass="63213">MISRYTRKAVPQSVELKGLTKHALNHHPLPERLDDISSTNNSHGKDTSSHSESDITQESPITSTDTGNSNSRSAFPSYAGTGVSTEGSSDFSWGYGELDQNATEKVQAMFTAIDELLYEQQLSAHTQGLQKECQQWAASFPHLRILGRQIITPSEGYGLYPRSPSAVSASHEATLSQERESTIFGIRGKKLHFSSSYKPSPTIKASGLCAVGGEEADCIIFSEGVIEEYLAFDHTDMEEGFHGNKSEAATEKQKLGYPPIAPFHCMKEDVLAHVFDNVWSKAVGCMEQLTRSHWEGCASDDESNVEITRLDSGSPYVLNEQHPLVLPRVPQSKVPSITSSPMSFCQASGHQPNVSGLLIHGMPLQPRNLSLMDKLLDLDDKLLTRPGSSSVLSNRNWPNRAMELSTSSLSYTTQSARRRNPPPRTLHPISTSHSRAGTPWPVEEILRGPRVPVTADTLSSPSPMTLGRNNLLPPIGTVEVEHLSAMGPQRPTKSHGDSSRARSAVVDEPNQQPQERLLLPVFSRPNTTQSFLPDTQYRSSCASEYPHQARPGRGSAGPQSHGSTKPQSRGGPISRTRQ</sequence>
<comment type="function">
    <text evidence="1">Involved in the localization of proteins to the cilium and cilium assembly. Indirectly regulates the signaling functions of the cilium, being required for normal SHH/smoothened signaling and proper development.</text>
</comment>
<comment type="subunit">
    <text evidence="1">Interacts with TBC1D32; may play a role in cilium assembly.</text>
</comment>
<comment type="subcellular location">
    <subcellularLocation>
        <location evidence="1">Cell projection</location>
        <location evidence="1">Cilium</location>
    </subcellularLocation>
</comment>
<comment type="alternative products">
    <event type="alternative splicing"/>
    <isoform>
        <id>Q6NSV7-1</id>
        <name>1</name>
        <sequence type="displayed"/>
    </isoform>
    <isoform>
        <id>Q6NSV7-2</id>
        <name>2</name>
        <sequence type="described" ref="VSP_031535"/>
    </isoform>
    <isoform>
        <id>Q6NSV7-3</id>
        <name>3</name>
        <sequence type="described" ref="VSP_031542"/>
    </isoform>
    <isoform>
        <id>Q6NSV7-4</id>
        <name>4</name>
        <sequence type="described" ref="VSP_031536 VSP_031541"/>
    </isoform>
    <isoform>
        <id>Q6NSV7-5</id>
        <name>5</name>
        <sequence type="described" ref="VSP_031538 VSP_031539"/>
    </isoform>
    <isoform>
        <id>Q6NSV7-6</id>
        <name>6</name>
        <sequence type="described" ref="VSP_031536 VSP_031537 VSP_031540"/>
    </isoform>
</comment>
<comment type="developmental stage">
    <text evidence="3">Strong expression in the early embryonic stages 8 dpc, 9 dpc and 10 dpc in the neuroepithelium and by the maxillary arches.</text>
</comment>
<comment type="similarity">
    <text evidence="7">Belongs to the FAM149 family.</text>
</comment>
<comment type="sequence caution" evidence="7">
    <conflict type="erroneous initiation">
        <sequence resource="EMBL-CDS" id="BAC98062"/>
    </conflict>
    <text>Extended N-terminus.</text>
</comment>
<dbReference type="EMBL" id="AK031973">
    <property type="protein sequence ID" value="BAC27633.1"/>
    <property type="molecule type" value="mRNA"/>
</dbReference>
<dbReference type="EMBL" id="BC008267">
    <property type="protein sequence ID" value="AAH08267.1"/>
    <property type="molecule type" value="mRNA"/>
</dbReference>
<dbReference type="EMBL" id="BC025183">
    <property type="protein sequence ID" value="AAH25183.1"/>
    <property type="molecule type" value="mRNA"/>
</dbReference>
<dbReference type="EMBL" id="BC057907">
    <property type="protein sequence ID" value="AAH57907.1"/>
    <property type="molecule type" value="mRNA"/>
</dbReference>
<dbReference type="EMBL" id="BC069846">
    <property type="protein sequence ID" value="AAH69846.1"/>
    <property type="molecule type" value="mRNA"/>
</dbReference>
<dbReference type="EMBL" id="BC080849">
    <property type="protein sequence ID" value="AAH80849.1"/>
    <property type="molecule type" value="mRNA"/>
</dbReference>
<dbReference type="EMBL" id="AK129252">
    <property type="protein sequence ID" value="BAC98062.1"/>
    <property type="status" value="ALT_INIT"/>
    <property type="molecule type" value="mRNA"/>
</dbReference>
<dbReference type="CCDS" id="CCDS49408.1">
    <molecule id="Q6NSV7-5"/>
</dbReference>
<dbReference type="CCDS" id="CCDS49409.1">
    <molecule id="Q6NSV7-1"/>
</dbReference>
<dbReference type="CCDS" id="CCDS49410.1">
    <molecule id="Q6NSV7-2"/>
</dbReference>
<dbReference type="RefSeq" id="NP_001019683.1">
    <molecule id="Q6NSV7-1"/>
    <property type="nucleotide sequence ID" value="NM_001024512.2"/>
</dbReference>
<dbReference type="RefSeq" id="NP_001171104.1">
    <molecule id="Q6NSV7-5"/>
    <property type="nucleotide sequence ID" value="NM_001177633.1"/>
</dbReference>
<dbReference type="RefSeq" id="NP_759011.2">
    <molecule id="Q6NSV7-2"/>
    <property type="nucleotide sequence ID" value="NM_172379.3"/>
</dbReference>
<dbReference type="FunCoup" id="Q6NSV7">
    <property type="interactions" value="3613"/>
</dbReference>
<dbReference type="STRING" id="10090.ENSMUSP00000087985"/>
<dbReference type="iPTMnet" id="Q6NSV7"/>
<dbReference type="PhosphoSitePlus" id="Q6NSV7"/>
<dbReference type="PaxDb" id="10090-ENSMUSP00000087985"/>
<dbReference type="ProteomicsDB" id="275964">
    <molecule id="Q6NSV7-1"/>
</dbReference>
<dbReference type="ProteomicsDB" id="275965">
    <molecule id="Q6NSV7-2"/>
</dbReference>
<dbReference type="ProteomicsDB" id="275966">
    <molecule id="Q6NSV7-3"/>
</dbReference>
<dbReference type="ProteomicsDB" id="275967">
    <molecule id="Q6NSV7-4"/>
</dbReference>
<dbReference type="ProteomicsDB" id="275968">
    <molecule id="Q6NSV7-5"/>
</dbReference>
<dbReference type="ProteomicsDB" id="275969">
    <molecule id="Q6NSV7-6"/>
</dbReference>
<dbReference type="Antibodypedia" id="49231">
    <property type="antibodies" value="67 antibodies from 11 providers"/>
</dbReference>
<dbReference type="DNASU" id="105428"/>
<dbReference type="Ensembl" id="ENSMUST00000051915.7">
    <molecule id="Q6NSV7-4"/>
    <property type="protein sequence ID" value="ENSMUSP00000056907.7"/>
    <property type="gene ID" value="ENSMUSG00000039599.17"/>
</dbReference>
<dbReference type="Ensembl" id="ENSMUST00000090499.13">
    <molecule id="Q6NSV7-1"/>
    <property type="protein sequence ID" value="ENSMUSP00000087985.6"/>
    <property type="gene ID" value="ENSMUSG00000039599.17"/>
</dbReference>
<dbReference type="Ensembl" id="ENSMUST00000090503.12">
    <molecule id="Q6NSV7-2"/>
    <property type="protein sequence ID" value="ENSMUSP00000087989.5"/>
    <property type="gene ID" value="ENSMUSG00000039599.17"/>
</dbReference>
<dbReference type="Ensembl" id="ENSMUST00000224721.2">
    <molecule id="Q6NSV7-5"/>
    <property type="protein sequence ID" value="ENSMUSP00000153509.2"/>
    <property type="gene ID" value="ENSMUSG00000039599.17"/>
</dbReference>
<dbReference type="Ensembl" id="ENSMUST00000224930.2">
    <molecule id="Q6NSV7-6"/>
    <property type="protein sequence ID" value="ENSMUSP00000153235.2"/>
    <property type="gene ID" value="ENSMUSG00000039599.17"/>
</dbReference>
<dbReference type="Ensembl" id="ENSMUST00000225942.2">
    <molecule id="Q6NSV7-3"/>
    <property type="protein sequence ID" value="ENSMUSP00000153645.2"/>
    <property type="gene ID" value="ENSMUSG00000039599.17"/>
</dbReference>
<dbReference type="GeneID" id="105428"/>
<dbReference type="KEGG" id="mmu:105428"/>
<dbReference type="UCSC" id="uc007sjh.1">
    <molecule id="Q6NSV7-6"/>
    <property type="organism name" value="mouse"/>
</dbReference>
<dbReference type="UCSC" id="uc007sji.2">
    <molecule id="Q6NSV7-5"/>
    <property type="organism name" value="mouse"/>
</dbReference>
<dbReference type="UCSC" id="uc007sjj.1">
    <molecule id="Q6NSV7-1"/>
    <property type="organism name" value="mouse"/>
</dbReference>
<dbReference type="UCSC" id="uc007sjk.1">
    <molecule id="Q6NSV7-2"/>
    <property type="organism name" value="mouse"/>
</dbReference>
<dbReference type="UCSC" id="uc007sjl.1">
    <molecule id="Q6NSV7-4"/>
    <property type="organism name" value="mouse"/>
</dbReference>
<dbReference type="UCSC" id="uc011zgp.1">
    <molecule id="Q6NSV7-3"/>
    <property type="organism name" value="mouse"/>
</dbReference>
<dbReference type="AGR" id="MGI:2145567"/>
<dbReference type="CTD" id="105428"/>
<dbReference type="MGI" id="MGI:2145567">
    <property type="gene designation" value="Fam149b"/>
</dbReference>
<dbReference type="VEuPathDB" id="HostDB:ENSMUSG00000039599"/>
<dbReference type="eggNOG" id="ENOG502QVD4">
    <property type="taxonomic scope" value="Eukaryota"/>
</dbReference>
<dbReference type="GeneTree" id="ENSGT00530000063727"/>
<dbReference type="HOGENOM" id="CLU_075706_0_0_1"/>
<dbReference type="InParanoid" id="Q6NSV7"/>
<dbReference type="OMA" id="EREEDCI"/>
<dbReference type="OrthoDB" id="2134133at2759"/>
<dbReference type="PhylomeDB" id="Q6NSV7"/>
<dbReference type="TreeFam" id="TF330725"/>
<dbReference type="BioGRID-ORCS" id="105428">
    <property type="hits" value="1 hit in 76 CRISPR screens"/>
</dbReference>
<dbReference type="ChiTaRS" id="Fam149b">
    <property type="organism name" value="mouse"/>
</dbReference>
<dbReference type="PRO" id="PR:Q6NSV7"/>
<dbReference type="Proteomes" id="UP000000589">
    <property type="component" value="Chromosome 14"/>
</dbReference>
<dbReference type="RNAct" id="Q6NSV7">
    <property type="molecule type" value="protein"/>
</dbReference>
<dbReference type="Bgee" id="ENSMUSG00000039599">
    <property type="expression patterns" value="Expressed in embryonic brain and 247 other cell types or tissues"/>
</dbReference>
<dbReference type="ExpressionAtlas" id="Q6NSV7">
    <property type="expression patterns" value="baseline and differential"/>
</dbReference>
<dbReference type="GO" id="GO:0005929">
    <property type="term" value="C:cilium"/>
    <property type="evidence" value="ECO:0007669"/>
    <property type="project" value="UniProtKB-SubCell"/>
</dbReference>
<dbReference type="GO" id="GO:0060271">
    <property type="term" value="P:cilium assembly"/>
    <property type="evidence" value="ECO:0000250"/>
    <property type="project" value="UniProtKB"/>
</dbReference>
<dbReference type="GO" id="GO:0061512">
    <property type="term" value="P:protein localization to cilium"/>
    <property type="evidence" value="ECO:0000250"/>
    <property type="project" value="UniProtKB"/>
</dbReference>
<dbReference type="InterPro" id="IPR022194">
    <property type="entry name" value="DUF3719"/>
</dbReference>
<dbReference type="InterPro" id="IPR039630">
    <property type="entry name" value="FAM149"/>
</dbReference>
<dbReference type="PANTHER" id="PTHR31997">
    <property type="entry name" value="AGAP003710-PA"/>
    <property type="match status" value="1"/>
</dbReference>
<dbReference type="PANTHER" id="PTHR31997:SF0">
    <property type="entry name" value="PRIMARY CILIUM ASSEMBLY PROTEIN FAM149B1"/>
    <property type="match status" value="1"/>
</dbReference>
<dbReference type="Pfam" id="PF12516">
    <property type="entry name" value="DUF3719"/>
    <property type="match status" value="1"/>
</dbReference>
<organism>
    <name type="scientific">Mus musculus</name>
    <name type="common">Mouse</name>
    <dbReference type="NCBI Taxonomy" id="10090"/>
    <lineage>
        <taxon>Eukaryota</taxon>
        <taxon>Metazoa</taxon>
        <taxon>Chordata</taxon>
        <taxon>Craniata</taxon>
        <taxon>Vertebrata</taxon>
        <taxon>Euteleostomi</taxon>
        <taxon>Mammalia</taxon>
        <taxon>Eutheria</taxon>
        <taxon>Euarchontoglires</taxon>
        <taxon>Glires</taxon>
        <taxon>Rodentia</taxon>
        <taxon>Myomorpha</taxon>
        <taxon>Muroidea</taxon>
        <taxon>Muridae</taxon>
        <taxon>Murinae</taxon>
        <taxon>Mus</taxon>
        <taxon>Mus</taxon>
    </lineage>
</organism>
<protein>
    <recommendedName>
        <fullName evidence="7">Primary cilium assembly protein FAM149B1</fullName>
    </recommendedName>
</protein>
<reference key="1">
    <citation type="journal article" date="2005" name="Science">
        <title>The transcriptional landscape of the mammalian genome.</title>
        <authorList>
            <person name="Carninci P."/>
            <person name="Kasukawa T."/>
            <person name="Katayama S."/>
            <person name="Gough J."/>
            <person name="Frith M.C."/>
            <person name="Maeda N."/>
            <person name="Oyama R."/>
            <person name="Ravasi T."/>
            <person name="Lenhard B."/>
            <person name="Wells C."/>
            <person name="Kodzius R."/>
            <person name="Shimokawa K."/>
            <person name="Bajic V.B."/>
            <person name="Brenner S.E."/>
            <person name="Batalov S."/>
            <person name="Forrest A.R."/>
            <person name="Zavolan M."/>
            <person name="Davis M.J."/>
            <person name="Wilming L.G."/>
            <person name="Aidinis V."/>
            <person name="Allen J.E."/>
            <person name="Ambesi-Impiombato A."/>
            <person name="Apweiler R."/>
            <person name="Aturaliya R.N."/>
            <person name="Bailey T.L."/>
            <person name="Bansal M."/>
            <person name="Baxter L."/>
            <person name="Beisel K.W."/>
            <person name="Bersano T."/>
            <person name="Bono H."/>
            <person name="Chalk A.M."/>
            <person name="Chiu K.P."/>
            <person name="Choudhary V."/>
            <person name="Christoffels A."/>
            <person name="Clutterbuck D.R."/>
            <person name="Crowe M.L."/>
            <person name="Dalla E."/>
            <person name="Dalrymple B.P."/>
            <person name="de Bono B."/>
            <person name="Della Gatta G."/>
            <person name="di Bernardo D."/>
            <person name="Down T."/>
            <person name="Engstrom P."/>
            <person name="Fagiolini M."/>
            <person name="Faulkner G."/>
            <person name="Fletcher C.F."/>
            <person name="Fukushima T."/>
            <person name="Furuno M."/>
            <person name="Futaki S."/>
            <person name="Gariboldi M."/>
            <person name="Georgii-Hemming P."/>
            <person name="Gingeras T.R."/>
            <person name="Gojobori T."/>
            <person name="Green R.E."/>
            <person name="Gustincich S."/>
            <person name="Harbers M."/>
            <person name="Hayashi Y."/>
            <person name="Hensch T.K."/>
            <person name="Hirokawa N."/>
            <person name="Hill D."/>
            <person name="Huminiecki L."/>
            <person name="Iacono M."/>
            <person name="Ikeo K."/>
            <person name="Iwama A."/>
            <person name="Ishikawa T."/>
            <person name="Jakt M."/>
            <person name="Kanapin A."/>
            <person name="Katoh M."/>
            <person name="Kawasawa Y."/>
            <person name="Kelso J."/>
            <person name="Kitamura H."/>
            <person name="Kitano H."/>
            <person name="Kollias G."/>
            <person name="Krishnan S.P."/>
            <person name="Kruger A."/>
            <person name="Kummerfeld S.K."/>
            <person name="Kurochkin I.V."/>
            <person name="Lareau L.F."/>
            <person name="Lazarevic D."/>
            <person name="Lipovich L."/>
            <person name="Liu J."/>
            <person name="Liuni S."/>
            <person name="McWilliam S."/>
            <person name="Madan Babu M."/>
            <person name="Madera M."/>
            <person name="Marchionni L."/>
            <person name="Matsuda H."/>
            <person name="Matsuzawa S."/>
            <person name="Miki H."/>
            <person name="Mignone F."/>
            <person name="Miyake S."/>
            <person name="Morris K."/>
            <person name="Mottagui-Tabar S."/>
            <person name="Mulder N."/>
            <person name="Nakano N."/>
            <person name="Nakauchi H."/>
            <person name="Ng P."/>
            <person name="Nilsson R."/>
            <person name="Nishiguchi S."/>
            <person name="Nishikawa S."/>
            <person name="Nori F."/>
            <person name="Ohara O."/>
            <person name="Okazaki Y."/>
            <person name="Orlando V."/>
            <person name="Pang K.C."/>
            <person name="Pavan W.J."/>
            <person name="Pavesi G."/>
            <person name="Pesole G."/>
            <person name="Petrovsky N."/>
            <person name="Piazza S."/>
            <person name="Reed J."/>
            <person name="Reid J.F."/>
            <person name="Ring B.Z."/>
            <person name="Ringwald M."/>
            <person name="Rost B."/>
            <person name="Ruan Y."/>
            <person name="Salzberg S.L."/>
            <person name="Sandelin A."/>
            <person name="Schneider C."/>
            <person name="Schoenbach C."/>
            <person name="Sekiguchi K."/>
            <person name="Semple C.A."/>
            <person name="Seno S."/>
            <person name="Sessa L."/>
            <person name="Sheng Y."/>
            <person name="Shibata Y."/>
            <person name="Shimada H."/>
            <person name="Shimada K."/>
            <person name="Silva D."/>
            <person name="Sinclair B."/>
            <person name="Sperling S."/>
            <person name="Stupka E."/>
            <person name="Sugiura K."/>
            <person name="Sultana R."/>
            <person name="Takenaka Y."/>
            <person name="Taki K."/>
            <person name="Tammoja K."/>
            <person name="Tan S.L."/>
            <person name="Tang S."/>
            <person name="Taylor M.S."/>
            <person name="Tegner J."/>
            <person name="Teichmann S.A."/>
            <person name="Ueda H.R."/>
            <person name="van Nimwegen E."/>
            <person name="Verardo R."/>
            <person name="Wei C.L."/>
            <person name="Yagi K."/>
            <person name="Yamanishi H."/>
            <person name="Zabarovsky E."/>
            <person name="Zhu S."/>
            <person name="Zimmer A."/>
            <person name="Hide W."/>
            <person name="Bult C."/>
            <person name="Grimmond S.M."/>
            <person name="Teasdale R.D."/>
            <person name="Liu E.T."/>
            <person name="Brusic V."/>
            <person name="Quackenbush J."/>
            <person name="Wahlestedt C."/>
            <person name="Mattick J.S."/>
            <person name="Hume D.A."/>
            <person name="Kai C."/>
            <person name="Sasaki D."/>
            <person name="Tomaru Y."/>
            <person name="Fukuda S."/>
            <person name="Kanamori-Katayama M."/>
            <person name="Suzuki M."/>
            <person name="Aoki J."/>
            <person name="Arakawa T."/>
            <person name="Iida J."/>
            <person name="Imamura K."/>
            <person name="Itoh M."/>
            <person name="Kato T."/>
            <person name="Kawaji H."/>
            <person name="Kawagashira N."/>
            <person name="Kawashima T."/>
            <person name="Kojima M."/>
            <person name="Kondo S."/>
            <person name="Konno H."/>
            <person name="Nakano K."/>
            <person name="Ninomiya N."/>
            <person name="Nishio T."/>
            <person name="Okada M."/>
            <person name="Plessy C."/>
            <person name="Shibata K."/>
            <person name="Shiraki T."/>
            <person name="Suzuki S."/>
            <person name="Tagami M."/>
            <person name="Waki K."/>
            <person name="Watahiki A."/>
            <person name="Okamura-Oho Y."/>
            <person name="Suzuki H."/>
            <person name="Kawai J."/>
            <person name="Hayashizaki Y."/>
        </authorList>
    </citation>
    <scope>NUCLEOTIDE SEQUENCE [LARGE SCALE MRNA] (ISOFORM 6)</scope>
    <source>
        <strain>C57BL/6J</strain>
        <tissue>Medulla oblongata</tissue>
    </source>
</reference>
<reference key="2">
    <citation type="journal article" date="2004" name="Genome Res.">
        <title>The status, quality, and expansion of the NIH full-length cDNA project: the Mammalian Gene Collection (MGC).</title>
        <authorList>
            <consortium name="The MGC Project Team"/>
        </authorList>
    </citation>
    <scope>NUCLEOTIDE SEQUENCE [LARGE SCALE MRNA] (ISOFORMS 1 AND 2)</scope>
    <scope>NUCLEOTIDE SEQUENCE [LARGE SCALE MRNA] OF 251-572 (ISOFORM 3)</scope>
    <source>
        <strain>C57BL/6J</strain>
        <strain>FVB/N</strain>
        <strain>FVB/N-3</strain>
        <tissue>Brain</tissue>
        <tissue>Kidney</tissue>
        <tissue>Liver</tissue>
        <tissue>Mammary tumor</tissue>
    </source>
</reference>
<reference key="3">
    <citation type="journal article" date="2003" name="DNA Res.">
        <title>Prediction of the coding sequences of mouse homologues of KIAA gene: III. The complete nucleotide sequences of 500 mouse KIAA-homologous cDNAs identified by screening of terminal sequences of cDNA clones randomly sampled from size-fractionated libraries.</title>
        <authorList>
            <person name="Okazaki N."/>
            <person name="Kikuno R."/>
            <person name="Ohara R."/>
            <person name="Inamoto S."/>
            <person name="Koseki H."/>
            <person name="Hiraoka S."/>
            <person name="Saga Y."/>
            <person name="Nagase T."/>
            <person name="Ohara O."/>
            <person name="Koga H."/>
        </authorList>
    </citation>
    <scope>NUCLEOTIDE SEQUENCE [LARGE SCALE MRNA] OF 97-578 (ISOFORM 4)</scope>
</reference>
<reference key="4">
    <citation type="journal article" date="2019" name="Am. J. Hum. Genet.">
        <title>Bi-allelic mutations in FAM149B1 cause abnormal primary cilium and a range of ciliopathy phenotypes in humans.</title>
        <authorList>
            <person name="Shaheen R."/>
            <person name="Jiang N."/>
            <person name="Alzahrani F."/>
            <person name="Ewida N."/>
            <person name="Al-Sheddi T."/>
            <person name="Alobeid E."/>
            <person name="Musaev D."/>
            <person name="Stanley V."/>
            <person name="Hashem M."/>
            <person name="Ibrahim N."/>
            <person name="Abdulwahab F."/>
            <person name="Alshenqiti A."/>
            <person name="Sonmez F.M."/>
            <person name="Saqati N."/>
            <person name="Alzaidan H."/>
            <person name="Al-Qattan M.M."/>
            <person name="Al-Mohanna F."/>
            <person name="Gleeson J.G."/>
            <person name="Alkuraya F.S."/>
        </authorList>
    </citation>
    <scope>DEVELOPMENTAL STAGE</scope>
</reference>